<evidence type="ECO:0000255" key="1">
    <source>
        <dbReference type="HAMAP-Rule" id="MF_01014"/>
    </source>
</evidence>
<evidence type="ECO:0000305" key="2"/>
<keyword id="KW-0028">Amino-acid biosynthesis</keyword>
<keyword id="KW-0963">Cytoplasm</keyword>
<keyword id="KW-0368">Histidine biosynthesis</keyword>
<keyword id="KW-0413">Isomerase</keyword>
<name>HIS4_BORBR</name>
<dbReference type="EC" id="5.3.1.16" evidence="1"/>
<dbReference type="EMBL" id="BX640451">
    <property type="protein sequence ID" value="CAE35221.1"/>
    <property type="status" value="ALT_INIT"/>
    <property type="molecule type" value="Genomic_DNA"/>
</dbReference>
<dbReference type="RefSeq" id="WP_010927224.1">
    <property type="nucleotide sequence ID" value="NC_002927.3"/>
</dbReference>
<dbReference type="SMR" id="Q7WDY0"/>
<dbReference type="GeneID" id="93206068"/>
<dbReference type="KEGG" id="bbr:BB4858"/>
<dbReference type="eggNOG" id="COG0106">
    <property type="taxonomic scope" value="Bacteria"/>
</dbReference>
<dbReference type="HOGENOM" id="CLU_048577_1_1_4"/>
<dbReference type="UniPathway" id="UPA00031">
    <property type="reaction ID" value="UER00009"/>
</dbReference>
<dbReference type="Proteomes" id="UP000001027">
    <property type="component" value="Chromosome"/>
</dbReference>
<dbReference type="GO" id="GO:0005737">
    <property type="term" value="C:cytoplasm"/>
    <property type="evidence" value="ECO:0007669"/>
    <property type="project" value="UniProtKB-SubCell"/>
</dbReference>
<dbReference type="GO" id="GO:0003949">
    <property type="term" value="F:1-(5-phosphoribosyl)-5-[(5-phosphoribosylamino)methylideneamino]imidazole-4-carboxamide isomerase activity"/>
    <property type="evidence" value="ECO:0007669"/>
    <property type="project" value="UniProtKB-UniRule"/>
</dbReference>
<dbReference type="GO" id="GO:0000105">
    <property type="term" value="P:L-histidine biosynthetic process"/>
    <property type="evidence" value="ECO:0007669"/>
    <property type="project" value="UniProtKB-UniRule"/>
</dbReference>
<dbReference type="GO" id="GO:0000162">
    <property type="term" value="P:L-tryptophan biosynthetic process"/>
    <property type="evidence" value="ECO:0007669"/>
    <property type="project" value="TreeGrafter"/>
</dbReference>
<dbReference type="CDD" id="cd04732">
    <property type="entry name" value="HisA"/>
    <property type="match status" value="1"/>
</dbReference>
<dbReference type="FunFam" id="3.20.20.70:FF:000009">
    <property type="entry name" value="1-(5-phosphoribosyl)-5-[(5-phosphoribosylamino)methylideneamino] imidazole-4-carboxamide isomerase"/>
    <property type="match status" value="1"/>
</dbReference>
<dbReference type="Gene3D" id="3.20.20.70">
    <property type="entry name" value="Aldolase class I"/>
    <property type="match status" value="1"/>
</dbReference>
<dbReference type="HAMAP" id="MF_01014">
    <property type="entry name" value="HisA"/>
    <property type="match status" value="1"/>
</dbReference>
<dbReference type="InterPro" id="IPR013785">
    <property type="entry name" value="Aldolase_TIM"/>
</dbReference>
<dbReference type="InterPro" id="IPR006062">
    <property type="entry name" value="His_biosynth"/>
</dbReference>
<dbReference type="InterPro" id="IPR006063">
    <property type="entry name" value="HisA_bact_arch"/>
</dbReference>
<dbReference type="InterPro" id="IPR044524">
    <property type="entry name" value="Isoase_HisA-like"/>
</dbReference>
<dbReference type="InterPro" id="IPR023016">
    <property type="entry name" value="Isoase_HisA-like_bact"/>
</dbReference>
<dbReference type="InterPro" id="IPR011060">
    <property type="entry name" value="RibuloseP-bd_barrel"/>
</dbReference>
<dbReference type="NCBIfam" id="TIGR00007">
    <property type="entry name" value="1-(5-phosphoribosyl)-5-[(5-phosphoribosylamino)methylideneamino]imidazole-4-carboxamide isomerase"/>
    <property type="match status" value="1"/>
</dbReference>
<dbReference type="PANTHER" id="PTHR43090">
    <property type="entry name" value="1-(5-PHOSPHORIBOSYL)-5-[(5-PHOSPHORIBOSYLAMINO)METHYLIDENEAMINO] IMIDAZOLE-4-CARBOXAMIDE ISOMERASE"/>
    <property type="match status" value="1"/>
</dbReference>
<dbReference type="PANTHER" id="PTHR43090:SF2">
    <property type="entry name" value="1-(5-PHOSPHORIBOSYL)-5-[(5-PHOSPHORIBOSYLAMINO)METHYLIDENEAMINO] IMIDAZOLE-4-CARBOXAMIDE ISOMERASE"/>
    <property type="match status" value="1"/>
</dbReference>
<dbReference type="Pfam" id="PF00977">
    <property type="entry name" value="His_biosynth"/>
    <property type="match status" value="1"/>
</dbReference>
<dbReference type="SUPFAM" id="SSF51366">
    <property type="entry name" value="Ribulose-phoshate binding barrel"/>
    <property type="match status" value="1"/>
</dbReference>
<accession>Q7WDY0</accession>
<sequence length="246" mass="26022">MLLIPAIDLKDGRCVRLRQGDLDDATVFSEDPAAMASHWLDLGARRLHLVDLNGAVAGKPKNEAPIKAILQAVGDDIPVQIGGGIRDLDTIERYLDAGISYVIIGTAAVKNPGFLQDACGAFPGQIIVGLDARDGKVATDGWSKLTRHDVLDLAKKFEDYGCEAIIYTDIGRDGMLSGVNVDATVRLAQHVRIPVFASGGIAGLSDIEALCAVEDDGVEGAILGRSIYEGALDFQAAQARADELAK</sequence>
<comment type="catalytic activity">
    <reaction evidence="1">
        <text>1-(5-phospho-beta-D-ribosyl)-5-[(5-phospho-beta-D-ribosylamino)methylideneamino]imidazole-4-carboxamide = 5-[(5-phospho-1-deoxy-D-ribulos-1-ylimino)methylamino]-1-(5-phospho-beta-D-ribosyl)imidazole-4-carboxamide</text>
        <dbReference type="Rhea" id="RHEA:15469"/>
        <dbReference type="ChEBI" id="CHEBI:58435"/>
        <dbReference type="ChEBI" id="CHEBI:58525"/>
        <dbReference type="EC" id="5.3.1.16"/>
    </reaction>
</comment>
<comment type="pathway">
    <text evidence="1">Amino-acid biosynthesis; L-histidine biosynthesis; L-histidine from 5-phospho-alpha-D-ribose 1-diphosphate: step 4/9.</text>
</comment>
<comment type="subcellular location">
    <subcellularLocation>
        <location evidence="1">Cytoplasm</location>
    </subcellularLocation>
</comment>
<comment type="similarity">
    <text evidence="1">Belongs to the HisA/HisF family.</text>
</comment>
<comment type="sequence caution" evidence="2">
    <conflict type="erroneous initiation">
        <sequence resource="EMBL-CDS" id="CAE35221"/>
    </conflict>
</comment>
<protein>
    <recommendedName>
        <fullName evidence="1">1-(5-phosphoribosyl)-5-[(5-phosphoribosylamino)methylideneamino] imidazole-4-carboxamide isomerase</fullName>
        <ecNumber evidence="1">5.3.1.16</ecNumber>
    </recommendedName>
    <alternativeName>
        <fullName evidence="1">Phosphoribosylformimino-5-aminoimidazole carboxamide ribotide isomerase</fullName>
    </alternativeName>
</protein>
<organism>
    <name type="scientific">Bordetella bronchiseptica (strain ATCC BAA-588 / NCTC 13252 / RB50)</name>
    <name type="common">Alcaligenes bronchisepticus</name>
    <dbReference type="NCBI Taxonomy" id="257310"/>
    <lineage>
        <taxon>Bacteria</taxon>
        <taxon>Pseudomonadati</taxon>
        <taxon>Pseudomonadota</taxon>
        <taxon>Betaproteobacteria</taxon>
        <taxon>Burkholderiales</taxon>
        <taxon>Alcaligenaceae</taxon>
        <taxon>Bordetella</taxon>
    </lineage>
</organism>
<reference key="1">
    <citation type="journal article" date="2003" name="Nat. Genet.">
        <title>Comparative analysis of the genome sequences of Bordetella pertussis, Bordetella parapertussis and Bordetella bronchiseptica.</title>
        <authorList>
            <person name="Parkhill J."/>
            <person name="Sebaihia M."/>
            <person name="Preston A."/>
            <person name="Murphy L.D."/>
            <person name="Thomson N.R."/>
            <person name="Harris D.E."/>
            <person name="Holden M.T.G."/>
            <person name="Churcher C.M."/>
            <person name="Bentley S.D."/>
            <person name="Mungall K.L."/>
            <person name="Cerdeno-Tarraga A.-M."/>
            <person name="Temple L."/>
            <person name="James K.D."/>
            <person name="Harris B."/>
            <person name="Quail M.A."/>
            <person name="Achtman M."/>
            <person name="Atkin R."/>
            <person name="Baker S."/>
            <person name="Basham D."/>
            <person name="Bason N."/>
            <person name="Cherevach I."/>
            <person name="Chillingworth T."/>
            <person name="Collins M."/>
            <person name="Cronin A."/>
            <person name="Davis P."/>
            <person name="Doggett J."/>
            <person name="Feltwell T."/>
            <person name="Goble A."/>
            <person name="Hamlin N."/>
            <person name="Hauser H."/>
            <person name="Holroyd S."/>
            <person name="Jagels K."/>
            <person name="Leather S."/>
            <person name="Moule S."/>
            <person name="Norberczak H."/>
            <person name="O'Neil S."/>
            <person name="Ormond D."/>
            <person name="Price C."/>
            <person name="Rabbinowitsch E."/>
            <person name="Rutter S."/>
            <person name="Sanders M."/>
            <person name="Saunders D."/>
            <person name="Seeger K."/>
            <person name="Sharp S."/>
            <person name="Simmonds M."/>
            <person name="Skelton J."/>
            <person name="Squares R."/>
            <person name="Squares S."/>
            <person name="Stevens K."/>
            <person name="Unwin L."/>
            <person name="Whitehead S."/>
            <person name="Barrell B.G."/>
            <person name="Maskell D.J."/>
        </authorList>
    </citation>
    <scope>NUCLEOTIDE SEQUENCE [LARGE SCALE GENOMIC DNA]</scope>
    <source>
        <strain>ATCC BAA-588 / NCTC 13252 / RB50</strain>
    </source>
</reference>
<feature type="chain" id="PRO_0000141981" description="1-(5-phosphoribosyl)-5-[(5-phosphoribosylamino)methylideneamino] imidazole-4-carboxamide isomerase">
    <location>
        <begin position="1"/>
        <end position="246"/>
    </location>
</feature>
<feature type="active site" description="Proton acceptor" evidence="1">
    <location>
        <position position="8"/>
    </location>
</feature>
<feature type="active site" description="Proton donor" evidence="1">
    <location>
        <position position="131"/>
    </location>
</feature>
<proteinExistence type="inferred from homology"/>
<gene>
    <name evidence="1" type="primary">hisA</name>
    <name type="ordered locus">BB4858</name>
</gene>